<organism>
    <name type="scientific">Haemophilus influenzae (strain ATCC 51907 / DSM 11121 / KW20 / Rd)</name>
    <dbReference type="NCBI Taxonomy" id="71421"/>
    <lineage>
        <taxon>Bacteria</taxon>
        <taxon>Pseudomonadati</taxon>
        <taxon>Pseudomonadota</taxon>
        <taxon>Gammaproteobacteria</taxon>
        <taxon>Pasteurellales</taxon>
        <taxon>Pasteurellaceae</taxon>
        <taxon>Haemophilus</taxon>
    </lineage>
</organism>
<evidence type="ECO:0000255" key="1">
    <source>
        <dbReference type="HAMAP-Rule" id="MF_01719"/>
    </source>
</evidence>
<feature type="chain" id="PRO_0000092509" description="Methionine import ATP-binding protein MetN">
    <location>
        <begin position="1"/>
        <end position="345"/>
    </location>
</feature>
<feature type="domain" description="ABC transporter" evidence="1">
    <location>
        <begin position="2"/>
        <end position="241"/>
    </location>
</feature>
<feature type="binding site" evidence="1">
    <location>
        <begin position="38"/>
        <end position="45"/>
    </location>
    <ligand>
        <name>ATP</name>
        <dbReference type="ChEBI" id="CHEBI:30616"/>
    </ligand>
</feature>
<accession>P44785</accession>
<name>METN_HAEIN</name>
<keyword id="KW-0029">Amino-acid transport</keyword>
<keyword id="KW-0067">ATP-binding</keyword>
<keyword id="KW-0997">Cell inner membrane</keyword>
<keyword id="KW-1003">Cell membrane</keyword>
<keyword id="KW-0472">Membrane</keyword>
<keyword id="KW-0547">Nucleotide-binding</keyword>
<keyword id="KW-1185">Reference proteome</keyword>
<keyword id="KW-1278">Translocase</keyword>
<keyword id="KW-0813">Transport</keyword>
<reference key="1">
    <citation type="journal article" date="1995" name="Science">
        <title>Whole-genome random sequencing and assembly of Haemophilus influenzae Rd.</title>
        <authorList>
            <person name="Fleischmann R.D."/>
            <person name="Adams M.D."/>
            <person name="White O."/>
            <person name="Clayton R.A."/>
            <person name="Kirkness E.F."/>
            <person name="Kerlavage A.R."/>
            <person name="Bult C.J."/>
            <person name="Tomb J.-F."/>
            <person name="Dougherty B.A."/>
            <person name="Merrick J.M."/>
            <person name="McKenney K."/>
            <person name="Sutton G.G."/>
            <person name="FitzHugh W."/>
            <person name="Fields C.A."/>
            <person name="Gocayne J.D."/>
            <person name="Scott J.D."/>
            <person name="Shirley R."/>
            <person name="Liu L.-I."/>
            <person name="Glodek A."/>
            <person name="Kelley J.M."/>
            <person name="Weidman J.F."/>
            <person name="Phillips C.A."/>
            <person name="Spriggs T."/>
            <person name="Hedblom E."/>
            <person name="Cotton M.D."/>
            <person name="Utterback T.R."/>
            <person name="Hanna M.C."/>
            <person name="Nguyen D.T."/>
            <person name="Saudek D.M."/>
            <person name="Brandon R.C."/>
            <person name="Fine L.D."/>
            <person name="Fritchman J.L."/>
            <person name="Fuhrmann J.L."/>
            <person name="Geoghagen N.S.M."/>
            <person name="Gnehm C.L."/>
            <person name="McDonald L.A."/>
            <person name="Small K.V."/>
            <person name="Fraser C.M."/>
            <person name="Smith H.O."/>
            <person name="Venter J.C."/>
        </authorList>
    </citation>
    <scope>NUCLEOTIDE SEQUENCE [LARGE SCALE GENOMIC DNA]</scope>
    <source>
        <strain>ATCC 51907 / DSM 11121 / KW20 / Rd</strain>
    </source>
</reference>
<protein>
    <recommendedName>
        <fullName evidence="1">Methionine import ATP-binding protein MetN</fullName>
        <ecNumber evidence="1">7.4.2.11</ecNumber>
    </recommendedName>
</protein>
<gene>
    <name evidence="1" type="primary">metN</name>
    <name type="ordered locus">HI_0621</name>
</gene>
<comment type="function">
    <text evidence="1">Part of the ABC transporter complex MetNIQ involved in methionine import. Responsible for energy coupling to the transport system.</text>
</comment>
<comment type="catalytic activity">
    <reaction evidence="1">
        <text>L-methionine(out) + ATP + H2O = L-methionine(in) + ADP + phosphate + H(+)</text>
        <dbReference type="Rhea" id="RHEA:29779"/>
        <dbReference type="ChEBI" id="CHEBI:15377"/>
        <dbReference type="ChEBI" id="CHEBI:15378"/>
        <dbReference type="ChEBI" id="CHEBI:30616"/>
        <dbReference type="ChEBI" id="CHEBI:43474"/>
        <dbReference type="ChEBI" id="CHEBI:57844"/>
        <dbReference type="ChEBI" id="CHEBI:456216"/>
        <dbReference type="EC" id="7.4.2.11"/>
    </reaction>
</comment>
<comment type="catalytic activity">
    <reaction evidence="1">
        <text>D-methionine(out) + ATP + H2O = D-methionine(in) + ADP + phosphate + H(+)</text>
        <dbReference type="Rhea" id="RHEA:29767"/>
        <dbReference type="ChEBI" id="CHEBI:15377"/>
        <dbReference type="ChEBI" id="CHEBI:15378"/>
        <dbReference type="ChEBI" id="CHEBI:30616"/>
        <dbReference type="ChEBI" id="CHEBI:43474"/>
        <dbReference type="ChEBI" id="CHEBI:57932"/>
        <dbReference type="ChEBI" id="CHEBI:456216"/>
        <dbReference type="EC" id="7.4.2.11"/>
    </reaction>
</comment>
<comment type="subunit">
    <text evidence="1">The complex is composed of two ATP-binding proteins (MetN), two transmembrane proteins (MetI) and a solute-binding protein (MetQ).</text>
</comment>
<comment type="subcellular location">
    <subcellularLocation>
        <location evidence="1">Cell inner membrane</location>
        <topology evidence="1">Peripheral membrane protein</topology>
    </subcellularLocation>
</comment>
<comment type="similarity">
    <text evidence="1">Belongs to the ABC transporter superfamily. Methionine importer (TC 3.A.1.24) family.</text>
</comment>
<sequence>MIKLNNIXKIFELPXKKLTALDNVSLNIEKGQICGVIGASGAGKSTLIRCVNLLEKPTSGSVIVDGVELTKLSDRELVLARRQIGMIFQHFNLLSSRTVFENVALPLELESESKAKIQEKITALLDLVGLSEKRDAYPSNLSGGQKQRVAIARALASDPKVLLCDEATSALDPATTQSILKLLKEINRTLGITILLITHEMEVVKQICDQVAVIDQGRLVEQGTVGEIFANPKTELAQEFIRSTFHISLPDEYLENLTDTPKHSKAYPIIKFEFTGRSVDAPLLSQASKKFGVELSILTSQIDYAGGVKFGYTIAEVEGDEDAITQTKVYLMENNVRVEVLGYVQ</sequence>
<proteinExistence type="inferred from homology"/>
<dbReference type="EC" id="7.4.2.11" evidence="1"/>
<dbReference type="EMBL" id="L42023">
    <property type="protein sequence ID" value="AAC22280.1"/>
    <property type="molecule type" value="Genomic_DNA"/>
</dbReference>
<dbReference type="PIR" id="C64082">
    <property type="entry name" value="C64082"/>
</dbReference>
<dbReference type="RefSeq" id="NP_438780.1">
    <property type="nucleotide sequence ID" value="NC_000907.1"/>
</dbReference>
<dbReference type="STRING" id="71421.HI_0621"/>
<dbReference type="EnsemblBacteria" id="AAC22280">
    <property type="protein sequence ID" value="AAC22280"/>
    <property type="gene ID" value="HI_0621"/>
</dbReference>
<dbReference type="KEGG" id="hin:HI_0621"/>
<dbReference type="PATRIC" id="fig|71421.8.peg.646"/>
<dbReference type="eggNOG" id="COG1135">
    <property type="taxonomic scope" value="Bacteria"/>
</dbReference>
<dbReference type="HOGENOM" id="CLU_000604_1_3_6"/>
<dbReference type="OrthoDB" id="9802264at2"/>
<dbReference type="PhylomeDB" id="P44785"/>
<dbReference type="BioCyc" id="HINF71421:G1GJ1-643-MONOMER"/>
<dbReference type="Proteomes" id="UP000000579">
    <property type="component" value="Chromosome"/>
</dbReference>
<dbReference type="GO" id="GO:0009276">
    <property type="term" value="C:Gram-negative-bacterium-type cell wall"/>
    <property type="evidence" value="ECO:0007669"/>
    <property type="project" value="InterPro"/>
</dbReference>
<dbReference type="GO" id="GO:0005886">
    <property type="term" value="C:plasma membrane"/>
    <property type="evidence" value="ECO:0007669"/>
    <property type="project" value="UniProtKB-SubCell"/>
</dbReference>
<dbReference type="GO" id="GO:0033232">
    <property type="term" value="F:ABC-type D-methionine transporter activity"/>
    <property type="evidence" value="ECO:0007669"/>
    <property type="project" value="UniProtKB-EC"/>
</dbReference>
<dbReference type="GO" id="GO:0005524">
    <property type="term" value="F:ATP binding"/>
    <property type="evidence" value="ECO:0007669"/>
    <property type="project" value="UniProtKB-KW"/>
</dbReference>
<dbReference type="GO" id="GO:0016887">
    <property type="term" value="F:ATP hydrolysis activity"/>
    <property type="evidence" value="ECO:0007669"/>
    <property type="project" value="InterPro"/>
</dbReference>
<dbReference type="CDD" id="cd03258">
    <property type="entry name" value="ABC_MetN_methionine_transporter"/>
    <property type="match status" value="1"/>
</dbReference>
<dbReference type="FunFam" id="3.40.50.300:FF:000233">
    <property type="entry name" value="Methionine import ATP-binding protein MetN"/>
    <property type="match status" value="1"/>
</dbReference>
<dbReference type="Gene3D" id="3.30.70.260">
    <property type="match status" value="1"/>
</dbReference>
<dbReference type="Gene3D" id="3.40.50.300">
    <property type="entry name" value="P-loop containing nucleotide triphosphate hydrolases"/>
    <property type="match status" value="1"/>
</dbReference>
<dbReference type="InterPro" id="IPR003593">
    <property type="entry name" value="AAA+_ATPase"/>
</dbReference>
<dbReference type="InterPro" id="IPR012692">
    <property type="entry name" value="ABC_MetN_proteobac"/>
</dbReference>
<dbReference type="InterPro" id="IPR003439">
    <property type="entry name" value="ABC_transporter-like_ATP-bd"/>
</dbReference>
<dbReference type="InterPro" id="IPR017871">
    <property type="entry name" value="ABC_transporter-like_CS"/>
</dbReference>
<dbReference type="InterPro" id="IPR045865">
    <property type="entry name" value="ACT-like_dom_sf"/>
</dbReference>
<dbReference type="InterPro" id="IPR041701">
    <property type="entry name" value="MetN_ABC"/>
</dbReference>
<dbReference type="InterPro" id="IPR050086">
    <property type="entry name" value="MetN_ABC_transporter-like"/>
</dbReference>
<dbReference type="InterPro" id="IPR018449">
    <property type="entry name" value="NIL_domain"/>
</dbReference>
<dbReference type="InterPro" id="IPR027417">
    <property type="entry name" value="P-loop_NTPase"/>
</dbReference>
<dbReference type="NCBIfam" id="TIGR02314">
    <property type="entry name" value="ABC_MetN"/>
    <property type="match status" value="1"/>
</dbReference>
<dbReference type="PANTHER" id="PTHR43166">
    <property type="entry name" value="AMINO ACID IMPORT ATP-BINDING PROTEIN"/>
    <property type="match status" value="1"/>
</dbReference>
<dbReference type="PANTHER" id="PTHR43166:SF30">
    <property type="entry name" value="METHIONINE IMPORT ATP-BINDING PROTEIN METN"/>
    <property type="match status" value="1"/>
</dbReference>
<dbReference type="Pfam" id="PF00005">
    <property type="entry name" value="ABC_tran"/>
    <property type="match status" value="1"/>
</dbReference>
<dbReference type="Pfam" id="PF09383">
    <property type="entry name" value="NIL"/>
    <property type="match status" value="1"/>
</dbReference>
<dbReference type="SMART" id="SM00382">
    <property type="entry name" value="AAA"/>
    <property type="match status" value="1"/>
</dbReference>
<dbReference type="SMART" id="SM00930">
    <property type="entry name" value="NIL"/>
    <property type="match status" value="1"/>
</dbReference>
<dbReference type="SUPFAM" id="SSF55021">
    <property type="entry name" value="ACT-like"/>
    <property type="match status" value="1"/>
</dbReference>
<dbReference type="SUPFAM" id="SSF52540">
    <property type="entry name" value="P-loop containing nucleoside triphosphate hydrolases"/>
    <property type="match status" value="1"/>
</dbReference>
<dbReference type="PROSITE" id="PS00211">
    <property type="entry name" value="ABC_TRANSPORTER_1"/>
    <property type="match status" value="1"/>
</dbReference>
<dbReference type="PROSITE" id="PS50893">
    <property type="entry name" value="ABC_TRANSPORTER_2"/>
    <property type="match status" value="1"/>
</dbReference>
<dbReference type="PROSITE" id="PS51264">
    <property type="entry name" value="METN"/>
    <property type="match status" value="1"/>
</dbReference>